<evidence type="ECO:0000255" key="1">
    <source>
        <dbReference type="HAMAP-Rule" id="MF_00206"/>
    </source>
</evidence>
<evidence type="ECO:0000255" key="2">
    <source>
        <dbReference type="PROSITE-ProRule" id="PRU01266"/>
    </source>
</evidence>
<dbReference type="EC" id="2.8.1.8" evidence="1"/>
<dbReference type="EMBL" id="CP000644">
    <property type="protein sequence ID" value="ABO89177.1"/>
    <property type="molecule type" value="Genomic_DNA"/>
</dbReference>
<dbReference type="RefSeq" id="WP_011898441.1">
    <property type="nucleotide sequence ID" value="NC_009348.1"/>
</dbReference>
<dbReference type="SMR" id="A4SJV5"/>
<dbReference type="STRING" id="29491.GCA_000820065_02585"/>
<dbReference type="KEGG" id="asa:ASA_1054"/>
<dbReference type="PATRIC" id="fig|382245.13.peg.1049"/>
<dbReference type="eggNOG" id="COG0320">
    <property type="taxonomic scope" value="Bacteria"/>
</dbReference>
<dbReference type="HOGENOM" id="CLU_033144_2_1_6"/>
<dbReference type="UniPathway" id="UPA00538">
    <property type="reaction ID" value="UER00593"/>
</dbReference>
<dbReference type="Proteomes" id="UP000000225">
    <property type="component" value="Chromosome"/>
</dbReference>
<dbReference type="GO" id="GO:0005737">
    <property type="term" value="C:cytoplasm"/>
    <property type="evidence" value="ECO:0007669"/>
    <property type="project" value="UniProtKB-SubCell"/>
</dbReference>
<dbReference type="GO" id="GO:0051539">
    <property type="term" value="F:4 iron, 4 sulfur cluster binding"/>
    <property type="evidence" value="ECO:0007669"/>
    <property type="project" value="UniProtKB-UniRule"/>
</dbReference>
<dbReference type="GO" id="GO:0016992">
    <property type="term" value="F:lipoate synthase activity"/>
    <property type="evidence" value="ECO:0007669"/>
    <property type="project" value="UniProtKB-UniRule"/>
</dbReference>
<dbReference type="GO" id="GO:0046872">
    <property type="term" value="F:metal ion binding"/>
    <property type="evidence" value="ECO:0007669"/>
    <property type="project" value="UniProtKB-KW"/>
</dbReference>
<dbReference type="CDD" id="cd01335">
    <property type="entry name" value="Radical_SAM"/>
    <property type="match status" value="1"/>
</dbReference>
<dbReference type="FunFam" id="3.20.20.70:FF:000023">
    <property type="entry name" value="Lipoyl synthase"/>
    <property type="match status" value="1"/>
</dbReference>
<dbReference type="Gene3D" id="3.20.20.70">
    <property type="entry name" value="Aldolase class I"/>
    <property type="match status" value="1"/>
</dbReference>
<dbReference type="HAMAP" id="MF_00206">
    <property type="entry name" value="Lipoyl_synth"/>
    <property type="match status" value="1"/>
</dbReference>
<dbReference type="InterPro" id="IPR013785">
    <property type="entry name" value="Aldolase_TIM"/>
</dbReference>
<dbReference type="InterPro" id="IPR006638">
    <property type="entry name" value="Elp3/MiaA/NifB-like_rSAM"/>
</dbReference>
<dbReference type="InterPro" id="IPR031691">
    <property type="entry name" value="LIAS_N"/>
</dbReference>
<dbReference type="InterPro" id="IPR003698">
    <property type="entry name" value="Lipoyl_synth"/>
</dbReference>
<dbReference type="InterPro" id="IPR007197">
    <property type="entry name" value="rSAM"/>
</dbReference>
<dbReference type="NCBIfam" id="TIGR00510">
    <property type="entry name" value="lipA"/>
    <property type="match status" value="1"/>
</dbReference>
<dbReference type="NCBIfam" id="NF004019">
    <property type="entry name" value="PRK05481.1"/>
    <property type="match status" value="1"/>
</dbReference>
<dbReference type="NCBIfam" id="NF009544">
    <property type="entry name" value="PRK12928.1"/>
    <property type="match status" value="1"/>
</dbReference>
<dbReference type="PANTHER" id="PTHR10949">
    <property type="entry name" value="LIPOYL SYNTHASE"/>
    <property type="match status" value="1"/>
</dbReference>
<dbReference type="PANTHER" id="PTHR10949:SF0">
    <property type="entry name" value="LIPOYL SYNTHASE, MITOCHONDRIAL"/>
    <property type="match status" value="1"/>
</dbReference>
<dbReference type="Pfam" id="PF16881">
    <property type="entry name" value="LIAS_N"/>
    <property type="match status" value="1"/>
</dbReference>
<dbReference type="Pfam" id="PF04055">
    <property type="entry name" value="Radical_SAM"/>
    <property type="match status" value="1"/>
</dbReference>
<dbReference type="PIRSF" id="PIRSF005963">
    <property type="entry name" value="Lipoyl_synth"/>
    <property type="match status" value="1"/>
</dbReference>
<dbReference type="SFLD" id="SFLDF00271">
    <property type="entry name" value="lipoyl_synthase"/>
    <property type="match status" value="1"/>
</dbReference>
<dbReference type="SFLD" id="SFLDS00029">
    <property type="entry name" value="Radical_SAM"/>
    <property type="match status" value="1"/>
</dbReference>
<dbReference type="SMART" id="SM00729">
    <property type="entry name" value="Elp3"/>
    <property type="match status" value="1"/>
</dbReference>
<dbReference type="SUPFAM" id="SSF102114">
    <property type="entry name" value="Radical SAM enzymes"/>
    <property type="match status" value="1"/>
</dbReference>
<dbReference type="PROSITE" id="PS51918">
    <property type="entry name" value="RADICAL_SAM"/>
    <property type="match status" value="1"/>
</dbReference>
<sequence length="326" mass="37008">MSKPVRMEPGVKLRDGDKMALIPVKFMPDPNEEVLRKPDWMRIKLPPSSQKIEHIKSTLRKNKLHSVCEEASCPNLAECFNHGTATFMIMGAICTRRCPFCDVAHGRPLALDPDEPQKLALTIKEMGLKYVVITSVDRDDLRDGGAQHFADCIKQIREHSPQTRIEILTPDFRGRMEQALEVFRETPPDVFNHNLETAPRMYRVARPGADYKWSLELLRRIKEMHPHVPTKSGVMMGLGETNEEIVQVLKDLREHGVNMLTLGQYLQPSRHHLPVKRYVPPAEFDELKDVAMGLGFSHAACGPFVRSSYHADLQAKGEEVVGYKAK</sequence>
<protein>
    <recommendedName>
        <fullName evidence="1">Lipoyl synthase</fullName>
        <ecNumber evidence="1">2.8.1.8</ecNumber>
    </recommendedName>
    <alternativeName>
        <fullName evidence="1">Lip-syn</fullName>
        <shortName evidence="1">LS</shortName>
    </alternativeName>
    <alternativeName>
        <fullName evidence="1">Lipoate synthase</fullName>
    </alternativeName>
    <alternativeName>
        <fullName evidence="1">Lipoic acid synthase</fullName>
    </alternativeName>
    <alternativeName>
        <fullName evidence="1">Sulfur insertion protein LipA</fullName>
    </alternativeName>
</protein>
<gene>
    <name evidence="1" type="primary">lipA</name>
    <name type="ordered locus">ASA_1054</name>
</gene>
<feature type="chain" id="PRO_1000012182" description="Lipoyl synthase">
    <location>
        <begin position="1"/>
        <end position="326"/>
    </location>
</feature>
<feature type="domain" description="Radical SAM core" evidence="2">
    <location>
        <begin position="80"/>
        <end position="297"/>
    </location>
</feature>
<feature type="binding site" evidence="1">
    <location>
        <position position="68"/>
    </location>
    <ligand>
        <name>[4Fe-4S] cluster</name>
        <dbReference type="ChEBI" id="CHEBI:49883"/>
        <label>1</label>
    </ligand>
</feature>
<feature type="binding site" evidence="1">
    <location>
        <position position="73"/>
    </location>
    <ligand>
        <name>[4Fe-4S] cluster</name>
        <dbReference type="ChEBI" id="CHEBI:49883"/>
        <label>1</label>
    </ligand>
</feature>
<feature type="binding site" evidence="1">
    <location>
        <position position="79"/>
    </location>
    <ligand>
        <name>[4Fe-4S] cluster</name>
        <dbReference type="ChEBI" id="CHEBI:49883"/>
        <label>1</label>
    </ligand>
</feature>
<feature type="binding site" evidence="1">
    <location>
        <position position="94"/>
    </location>
    <ligand>
        <name>[4Fe-4S] cluster</name>
        <dbReference type="ChEBI" id="CHEBI:49883"/>
        <label>2</label>
        <note>4Fe-4S-S-AdoMet</note>
    </ligand>
</feature>
<feature type="binding site" evidence="1">
    <location>
        <position position="98"/>
    </location>
    <ligand>
        <name>[4Fe-4S] cluster</name>
        <dbReference type="ChEBI" id="CHEBI:49883"/>
        <label>2</label>
        <note>4Fe-4S-S-AdoMet</note>
    </ligand>
</feature>
<feature type="binding site" evidence="1">
    <location>
        <position position="101"/>
    </location>
    <ligand>
        <name>[4Fe-4S] cluster</name>
        <dbReference type="ChEBI" id="CHEBI:49883"/>
        <label>2</label>
        <note>4Fe-4S-S-AdoMet</note>
    </ligand>
</feature>
<feature type="binding site" evidence="1">
    <location>
        <position position="308"/>
    </location>
    <ligand>
        <name>[4Fe-4S] cluster</name>
        <dbReference type="ChEBI" id="CHEBI:49883"/>
        <label>1</label>
    </ligand>
</feature>
<reference key="1">
    <citation type="journal article" date="2008" name="BMC Genomics">
        <title>The genome of Aeromonas salmonicida subsp. salmonicida A449: insights into the evolution of a fish pathogen.</title>
        <authorList>
            <person name="Reith M.E."/>
            <person name="Singh R.K."/>
            <person name="Curtis B."/>
            <person name="Boyd J.M."/>
            <person name="Bouevitch A."/>
            <person name="Kimball J."/>
            <person name="Munholland J."/>
            <person name="Murphy C."/>
            <person name="Sarty D."/>
            <person name="Williams J."/>
            <person name="Nash J.H."/>
            <person name="Johnson S.C."/>
            <person name="Brown L.L."/>
        </authorList>
    </citation>
    <scope>NUCLEOTIDE SEQUENCE [LARGE SCALE GENOMIC DNA]</scope>
    <source>
        <strain>A449</strain>
    </source>
</reference>
<organism>
    <name type="scientific">Aeromonas salmonicida (strain A449)</name>
    <dbReference type="NCBI Taxonomy" id="382245"/>
    <lineage>
        <taxon>Bacteria</taxon>
        <taxon>Pseudomonadati</taxon>
        <taxon>Pseudomonadota</taxon>
        <taxon>Gammaproteobacteria</taxon>
        <taxon>Aeromonadales</taxon>
        <taxon>Aeromonadaceae</taxon>
        <taxon>Aeromonas</taxon>
    </lineage>
</organism>
<name>LIPA_AERS4</name>
<comment type="function">
    <text evidence="1">Catalyzes the radical-mediated insertion of two sulfur atoms into the C-6 and C-8 positions of the octanoyl moiety bound to the lipoyl domains of lipoate-dependent enzymes, thereby converting the octanoylated domains into lipoylated derivatives.</text>
</comment>
<comment type="catalytic activity">
    <reaction evidence="1">
        <text>[[Fe-S] cluster scaffold protein carrying a second [4Fe-4S](2+) cluster] + N(6)-octanoyl-L-lysyl-[protein] + 2 oxidized [2Fe-2S]-[ferredoxin] + 2 S-adenosyl-L-methionine + 4 H(+) = [[Fe-S] cluster scaffold protein] + N(6)-[(R)-dihydrolipoyl]-L-lysyl-[protein] + 4 Fe(3+) + 2 hydrogen sulfide + 2 5'-deoxyadenosine + 2 L-methionine + 2 reduced [2Fe-2S]-[ferredoxin]</text>
        <dbReference type="Rhea" id="RHEA:16585"/>
        <dbReference type="Rhea" id="RHEA-COMP:9928"/>
        <dbReference type="Rhea" id="RHEA-COMP:10000"/>
        <dbReference type="Rhea" id="RHEA-COMP:10001"/>
        <dbReference type="Rhea" id="RHEA-COMP:10475"/>
        <dbReference type="Rhea" id="RHEA-COMP:14568"/>
        <dbReference type="Rhea" id="RHEA-COMP:14569"/>
        <dbReference type="ChEBI" id="CHEBI:15378"/>
        <dbReference type="ChEBI" id="CHEBI:17319"/>
        <dbReference type="ChEBI" id="CHEBI:29034"/>
        <dbReference type="ChEBI" id="CHEBI:29919"/>
        <dbReference type="ChEBI" id="CHEBI:33722"/>
        <dbReference type="ChEBI" id="CHEBI:33737"/>
        <dbReference type="ChEBI" id="CHEBI:33738"/>
        <dbReference type="ChEBI" id="CHEBI:57844"/>
        <dbReference type="ChEBI" id="CHEBI:59789"/>
        <dbReference type="ChEBI" id="CHEBI:78809"/>
        <dbReference type="ChEBI" id="CHEBI:83100"/>
        <dbReference type="EC" id="2.8.1.8"/>
    </reaction>
</comment>
<comment type="cofactor">
    <cofactor evidence="1">
        <name>[4Fe-4S] cluster</name>
        <dbReference type="ChEBI" id="CHEBI:49883"/>
    </cofactor>
    <text evidence="1">Binds 2 [4Fe-4S] clusters per subunit. One cluster is coordinated with 3 cysteines and an exchangeable S-adenosyl-L-methionine.</text>
</comment>
<comment type="pathway">
    <text evidence="1">Protein modification; protein lipoylation via endogenous pathway; protein N(6)-(lipoyl)lysine from octanoyl-[acyl-carrier-protein]: step 2/2.</text>
</comment>
<comment type="subcellular location">
    <subcellularLocation>
        <location evidence="1">Cytoplasm</location>
    </subcellularLocation>
</comment>
<comment type="similarity">
    <text evidence="1">Belongs to the radical SAM superfamily. Lipoyl synthase family.</text>
</comment>
<keyword id="KW-0004">4Fe-4S</keyword>
<keyword id="KW-0963">Cytoplasm</keyword>
<keyword id="KW-0408">Iron</keyword>
<keyword id="KW-0411">Iron-sulfur</keyword>
<keyword id="KW-0479">Metal-binding</keyword>
<keyword id="KW-0949">S-adenosyl-L-methionine</keyword>
<keyword id="KW-0808">Transferase</keyword>
<accession>A4SJV5</accession>
<proteinExistence type="inferred from homology"/>